<evidence type="ECO:0000255" key="1">
    <source>
        <dbReference type="HAMAP-Rule" id="MF_01306"/>
    </source>
</evidence>
<evidence type="ECO:0000256" key="2">
    <source>
        <dbReference type="SAM" id="MobiDB-lite"/>
    </source>
</evidence>
<evidence type="ECO:0000305" key="3"/>
<keyword id="KW-0687">Ribonucleoprotein</keyword>
<keyword id="KW-0689">Ribosomal protein</keyword>
<keyword id="KW-0694">RNA-binding</keyword>
<keyword id="KW-0699">rRNA-binding</keyword>
<reference key="1">
    <citation type="journal article" date="2002" name="Proc. Natl. Acad. Sci. U.S.A.">
        <title>The Brucella suis genome reveals fundamental similarities between animal and plant pathogens and symbionts.</title>
        <authorList>
            <person name="Paulsen I.T."/>
            <person name="Seshadri R."/>
            <person name="Nelson K.E."/>
            <person name="Eisen J.A."/>
            <person name="Heidelberg J.F."/>
            <person name="Read T.D."/>
            <person name="Dodson R.J."/>
            <person name="Umayam L.A."/>
            <person name="Brinkac L.M."/>
            <person name="Beanan M.J."/>
            <person name="Daugherty S.C."/>
            <person name="DeBoy R.T."/>
            <person name="Durkin A.S."/>
            <person name="Kolonay J.F."/>
            <person name="Madupu R."/>
            <person name="Nelson W.C."/>
            <person name="Ayodeji B."/>
            <person name="Kraul M."/>
            <person name="Shetty J."/>
            <person name="Malek J.A."/>
            <person name="Van Aken S.E."/>
            <person name="Riedmuller S."/>
            <person name="Tettelin H."/>
            <person name="Gill S.R."/>
            <person name="White O."/>
            <person name="Salzberg S.L."/>
            <person name="Hoover D.L."/>
            <person name="Lindler L.E."/>
            <person name="Halling S.M."/>
            <person name="Boyle S.M."/>
            <person name="Fraser C.M."/>
        </authorList>
    </citation>
    <scope>NUCLEOTIDE SEQUENCE [LARGE SCALE GENOMIC DNA]</scope>
    <source>
        <strain>1330</strain>
    </source>
</reference>
<reference key="2">
    <citation type="journal article" date="2011" name="J. Bacteriol.">
        <title>Revised genome sequence of Brucella suis 1330.</title>
        <authorList>
            <person name="Tae H."/>
            <person name="Shallom S."/>
            <person name="Settlage R."/>
            <person name="Preston D."/>
            <person name="Adams L.G."/>
            <person name="Garner H.R."/>
        </authorList>
    </citation>
    <scope>NUCLEOTIDE SEQUENCE [LARGE SCALE GENOMIC DNA]</scope>
    <source>
        <strain>1330</strain>
    </source>
</reference>
<accession>P59128</accession>
<accession>G0K8X8</accession>
<organism>
    <name type="scientific">Brucella suis biovar 1 (strain 1330)</name>
    <dbReference type="NCBI Taxonomy" id="204722"/>
    <lineage>
        <taxon>Bacteria</taxon>
        <taxon>Pseudomonadati</taxon>
        <taxon>Pseudomonadota</taxon>
        <taxon>Alphaproteobacteria</taxon>
        <taxon>Hyphomicrobiales</taxon>
        <taxon>Brucellaceae</taxon>
        <taxon>Brucella/Ochrobactrum group</taxon>
        <taxon>Brucella</taxon>
    </lineage>
</organism>
<dbReference type="EMBL" id="AE014291">
    <property type="protein sequence ID" value="AAN29759.1"/>
    <property type="molecule type" value="Genomic_DNA"/>
</dbReference>
<dbReference type="EMBL" id="CP002997">
    <property type="protein sequence ID" value="AEM18176.1"/>
    <property type="molecule type" value="Genomic_DNA"/>
</dbReference>
<dbReference type="RefSeq" id="WP_006190107.1">
    <property type="nucleotide sequence ID" value="NZ_KN046804.1"/>
</dbReference>
<dbReference type="SMR" id="P59128"/>
<dbReference type="GeneID" id="45051897"/>
<dbReference type="KEGG" id="bms:BR0830"/>
<dbReference type="KEGG" id="bsi:BS1330_I0826"/>
<dbReference type="PATRIC" id="fig|204722.21.peg.1654"/>
<dbReference type="HOGENOM" id="CLU_092403_0_0_5"/>
<dbReference type="PhylomeDB" id="P59128"/>
<dbReference type="Proteomes" id="UP000007104">
    <property type="component" value="Chromosome I"/>
</dbReference>
<dbReference type="GO" id="GO:0015935">
    <property type="term" value="C:small ribosomal subunit"/>
    <property type="evidence" value="ECO:0007669"/>
    <property type="project" value="InterPro"/>
</dbReference>
<dbReference type="GO" id="GO:0019843">
    <property type="term" value="F:rRNA binding"/>
    <property type="evidence" value="ECO:0007669"/>
    <property type="project" value="UniProtKB-UniRule"/>
</dbReference>
<dbReference type="GO" id="GO:0003735">
    <property type="term" value="F:structural constituent of ribosome"/>
    <property type="evidence" value="ECO:0007669"/>
    <property type="project" value="InterPro"/>
</dbReference>
<dbReference type="GO" id="GO:0042274">
    <property type="term" value="P:ribosomal small subunit biogenesis"/>
    <property type="evidence" value="ECO:0007669"/>
    <property type="project" value="TreeGrafter"/>
</dbReference>
<dbReference type="GO" id="GO:0006412">
    <property type="term" value="P:translation"/>
    <property type="evidence" value="ECO:0007669"/>
    <property type="project" value="UniProtKB-UniRule"/>
</dbReference>
<dbReference type="CDD" id="cd00165">
    <property type="entry name" value="S4"/>
    <property type="match status" value="1"/>
</dbReference>
<dbReference type="FunFam" id="3.10.290.10:FF:000001">
    <property type="entry name" value="30S ribosomal protein S4"/>
    <property type="match status" value="1"/>
</dbReference>
<dbReference type="Gene3D" id="1.10.1050.10">
    <property type="entry name" value="Ribosomal Protein S4 Delta 41, Chain A, domain 1"/>
    <property type="match status" value="1"/>
</dbReference>
<dbReference type="Gene3D" id="3.10.290.10">
    <property type="entry name" value="RNA-binding S4 domain"/>
    <property type="match status" value="1"/>
</dbReference>
<dbReference type="HAMAP" id="MF_01306_B">
    <property type="entry name" value="Ribosomal_uS4_B"/>
    <property type="match status" value="1"/>
</dbReference>
<dbReference type="InterPro" id="IPR022801">
    <property type="entry name" value="Ribosomal_uS4"/>
</dbReference>
<dbReference type="InterPro" id="IPR005709">
    <property type="entry name" value="Ribosomal_uS4_bac-type"/>
</dbReference>
<dbReference type="InterPro" id="IPR018079">
    <property type="entry name" value="Ribosomal_uS4_CS"/>
</dbReference>
<dbReference type="InterPro" id="IPR001912">
    <property type="entry name" value="Ribosomal_uS4_N"/>
</dbReference>
<dbReference type="InterPro" id="IPR002942">
    <property type="entry name" value="S4_RNA-bd"/>
</dbReference>
<dbReference type="InterPro" id="IPR036986">
    <property type="entry name" value="S4_RNA-bd_sf"/>
</dbReference>
<dbReference type="NCBIfam" id="NF003717">
    <property type="entry name" value="PRK05327.1"/>
    <property type="match status" value="1"/>
</dbReference>
<dbReference type="NCBIfam" id="TIGR01017">
    <property type="entry name" value="rpsD_bact"/>
    <property type="match status" value="1"/>
</dbReference>
<dbReference type="PANTHER" id="PTHR11831">
    <property type="entry name" value="30S 40S RIBOSOMAL PROTEIN"/>
    <property type="match status" value="1"/>
</dbReference>
<dbReference type="PANTHER" id="PTHR11831:SF4">
    <property type="entry name" value="SMALL RIBOSOMAL SUBUNIT PROTEIN US4M"/>
    <property type="match status" value="1"/>
</dbReference>
<dbReference type="Pfam" id="PF00163">
    <property type="entry name" value="Ribosomal_S4"/>
    <property type="match status" value="1"/>
</dbReference>
<dbReference type="Pfam" id="PF01479">
    <property type="entry name" value="S4"/>
    <property type="match status" value="1"/>
</dbReference>
<dbReference type="SMART" id="SM01390">
    <property type="entry name" value="Ribosomal_S4"/>
    <property type="match status" value="1"/>
</dbReference>
<dbReference type="SMART" id="SM00363">
    <property type="entry name" value="S4"/>
    <property type="match status" value="1"/>
</dbReference>
<dbReference type="SUPFAM" id="SSF55174">
    <property type="entry name" value="Alpha-L RNA-binding motif"/>
    <property type="match status" value="1"/>
</dbReference>
<dbReference type="PROSITE" id="PS00632">
    <property type="entry name" value="RIBOSOMAL_S4"/>
    <property type="match status" value="1"/>
</dbReference>
<dbReference type="PROSITE" id="PS50889">
    <property type="entry name" value="S4"/>
    <property type="match status" value="1"/>
</dbReference>
<protein>
    <recommendedName>
        <fullName evidence="1">Small ribosomal subunit protein uS4</fullName>
    </recommendedName>
    <alternativeName>
        <fullName evidence="3">30S ribosomal protein S4</fullName>
    </alternativeName>
</protein>
<proteinExistence type="inferred from homology"/>
<sequence>MSKRESAKYKIDRRLGENIWGRPKSPVNRREYGPGQHGQRRKGKLSDFGVQLRAKQKLKGFYGDISEKQFRKTYEEAARRKGDTGENLIGLLESRLDAVVYRAKFVPTIFAARQFINHGHVNVNGRRVNIQSYRLKVGDVVEVREKSKQLAIVLEAVQLAERDVPDYIDVDHNKMVATYNRVPGLLDVPYAVQMEPNLVVEFYSR</sequence>
<gene>
    <name evidence="1" type="primary">rpsD</name>
    <name type="ordered locus">BR0830</name>
    <name type="ordered locus">BS1330_I0826</name>
</gene>
<feature type="chain" id="PRO_0000132352" description="Small ribosomal subunit protein uS4">
    <location>
        <begin position="1"/>
        <end position="205"/>
    </location>
</feature>
<feature type="domain" description="S4 RNA-binding" evidence="1">
    <location>
        <begin position="94"/>
        <end position="157"/>
    </location>
</feature>
<feature type="region of interest" description="Disordered" evidence="2">
    <location>
        <begin position="19"/>
        <end position="45"/>
    </location>
</feature>
<comment type="function">
    <text evidence="1">One of the primary rRNA binding proteins, it binds directly to 16S rRNA where it nucleates assembly of the body of the 30S subunit.</text>
</comment>
<comment type="function">
    <text evidence="1">With S5 and S12 plays an important role in translational accuracy.</text>
</comment>
<comment type="subunit">
    <text evidence="1">Part of the 30S ribosomal subunit. Contacts protein S5. The interaction surface between S4 and S5 is involved in control of translational fidelity.</text>
</comment>
<comment type="similarity">
    <text evidence="1">Belongs to the universal ribosomal protein uS4 family.</text>
</comment>
<name>RS4_BRUSU</name>